<accession>F5HDY6</accession>
<organism>
    <name type="scientific">Human herpesvirus 8 type P (isolate GK18)</name>
    <name type="common">HHV-8</name>
    <name type="synonym">Kaposi's sarcoma-associated herpesvirus</name>
    <dbReference type="NCBI Taxonomy" id="868565"/>
    <lineage>
        <taxon>Viruses</taxon>
        <taxon>Duplodnaviria</taxon>
        <taxon>Heunggongvirae</taxon>
        <taxon>Peploviricota</taxon>
        <taxon>Herviviricetes</taxon>
        <taxon>Herpesvirales</taxon>
        <taxon>Orthoherpesviridae</taxon>
        <taxon>Gammaherpesvirinae</taxon>
        <taxon>Rhadinovirus</taxon>
        <taxon>Rhadinovirus humangamma8</taxon>
        <taxon>Human herpesvirus 8</taxon>
    </lineage>
</organism>
<sequence>MASSDILSVARTDDGSVCEVSLRGGRKKTTVYLPDTEPWVVETDAIKDAFLSDGIVDMARKLHRGALPSNSHNGLRMVLFCYCYLQNCVYLALFLCPLNPYLVTPSSIEFAEPVVAPEVLFPHPAEMSRGCDDAIFCKLPYTVPIINTTFGRIYPNSTREPDGRPTDYSMALRRAFAVMVNTSCAGVTLCRGETQTASRNHTEWENLLAMFSVIIYALDHNCHPEALSIASGIFDERDYGLFISQPRSVPSPTPCDVSWEDIYNGTYLARPGNCDPWPNLSTPPLILNFK</sequence>
<proteinExistence type="predicted"/>
<organismHost>
    <name type="scientific">Homo sapiens</name>
    <name type="common">Human</name>
    <dbReference type="NCBI Taxonomy" id="9606"/>
</organismHost>
<dbReference type="EMBL" id="AF148805">
    <property type="protein sequence ID" value="ABD28878.1"/>
    <property type="molecule type" value="Genomic_DNA"/>
</dbReference>
<dbReference type="RefSeq" id="YP_001129380.1">
    <property type="nucleotide sequence ID" value="NC_009333.1"/>
</dbReference>
<dbReference type="SMR" id="F5HDY6"/>
<dbReference type="BioGRID" id="1776990">
    <property type="interactions" value="5"/>
</dbReference>
<dbReference type="DNASU" id="4961487"/>
<dbReference type="GeneID" id="4961487"/>
<dbReference type="KEGG" id="vg:4961487"/>
<dbReference type="Proteomes" id="UP000000942">
    <property type="component" value="Segment"/>
</dbReference>
<protein>
    <recommendedName>
        <fullName>Protein ORF27</fullName>
    </recommendedName>
</protein>
<name>ORF27_HHV8P</name>
<reference key="1">
    <citation type="journal article" date="1999" name="J. Virol.">
        <title>Identification of a spliced gene from Kaposi's sarcoma-associated herpesvirus encoding a protein with similarities to latent membrane proteins 1 and 2A of Epstein-Barr virus.</title>
        <authorList>
            <person name="Glenn M."/>
            <person name="Rainbow L."/>
            <person name="Aurade F."/>
            <person name="Davison A."/>
            <person name="Schulz T.F."/>
        </authorList>
    </citation>
    <scope>NUCLEOTIDE SEQUENCE [LARGE SCALE GENOMIC DNA]</scope>
</reference>
<reference key="2">
    <citation type="journal article" date="2006" name="J. Gen. Virol.">
        <title>Kaposi's sarcoma-associated herpesvirus immune modulation: an overview.</title>
        <authorList>
            <person name="Rezaee S.A.R."/>
            <person name="Cunningham C."/>
            <person name="Davison A.J."/>
            <person name="Blackbourn D.J."/>
        </authorList>
    </citation>
    <scope>NUCLEOTIDE SEQUENCE [LARGE SCALE GENOMIC DNA]</scope>
</reference>
<feature type="chain" id="PRO_0000423841" description="Protein ORF27">
    <location>
        <begin position="1"/>
        <end position="290"/>
    </location>
</feature>
<keyword id="KW-1185">Reference proteome</keyword>
<gene>
    <name type="primary">ORF27</name>
</gene>